<reference key="1">
    <citation type="submission" date="2006-08" db="EMBL/GenBank/DDBJ databases">
        <title>Complete sequence of Shewanella frigidimarina NCIMB 400.</title>
        <authorList>
            <consortium name="US DOE Joint Genome Institute"/>
            <person name="Copeland A."/>
            <person name="Lucas S."/>
            <person name="Lapidus A."/>
            <person name="Barry K."/>
            <person name="Detter J.C."/>
            <person name="Glavina del Rio T."/>
            <person name="Hammon N."/>
            <person name="Israni S."/>
            <person name="Dalin E."/>
            <person name="Tice H."/>
            <person name="Pitluck S."/>
            <person name="Fredrickson J.K."/>
            <person name="Kolker E."/>
            <person name="McCuel L.A."/>
            <person name="DiChristina T."/>
            <person name="Nealson K.H."/>
            <person name="Newman D."/>
            <person name="Tiedje J.M."/>
            <person name="Zhou J."/>
            <person name="Romine M.F."/>
            <person name="Culley D.E."/>
            <person name="Serres M."/>
            <person name="Chertkov O."/>
            <person name="Brettin T."/>
            <person name="Bruce D."/>
            <person name="Han C."/>
            <person name="Tapia R."/>
            <person name="Gilna P."/>
            <person name="Schmutz J."/>
            <person name="Larimer F."/>
            <person name="Land M."/>
            <person name="Hauser L."/>
            <person name="Kyrpides N."/>
            <person name="Mikhailova N."/>
            <person name="Richardson P."/>
        </authorList>
    </citation>
    <scope>NUCLEOTIDE SEQUENCE [LARGE SCALE GENOMIC DNA]</scope>
    <source>
        <strain>NCIMB 400</strain>
    </source>
</reference>
<gene>
    <name evidence="1" type="primary">lysS</name>
    <name type="ordered locus">Sfri_0583</name>
</gene>
<feature type="chain" id="PRO_1000012928" description="Lysine--tRNA ligase">
    <location>
        <begin position="1"/>
        <end position="500"/>
    </location>
</feature>
<feature type="binding site" evidence="1">
    <location>
        <position position="410"/>
    </location>
    <ligand>
        <name>Mg(2+)</name>
        <dbReference type="ChEBI" id="CHEBI:18420"/>
        <label>1</label>
    </ligand>
</feature>
<feature type="binding site" evidence="1">
    <location>
        <position position="417"/>
    </location>
    <ligand>
        <name>Mg(2+)</name>
        <dbReference type="ChEBI" id="CHEBI:18420"/>
        <label>1</label>
    </ligand>
</feature>
<feature type="binding site" evidence="1">
    <location>
        <position position="417"/>
    </location>
    <ligand>
        <name>Mg(2+)</name>
        <dbReference type="ChEBI" id="CHEBI:18420"/>
        <label>2</label>
    </ligand>
</feature>
<keyword id="KW-0030">Aminoacyl-tRNA synthetase</keyword>
<keyword id="KW-0067">ATP-binding</keyword>
<keyword id="KW-0963">Cytoplasm</keyword>
<keyword id="KW-0436">Ligase</keyword>
<keyword id="KW-0460">Magnesium</keyword>
<keyword id="KW-0479">Metal-binding</keyword>
<keyword id="KW-0547">Nucleotide-binding</keyword>
<keyword id="KW-0648">Protein biosynthesis</keyword>
<keyword id="KW-1185">Reference proteome</keyword>
<comment type="catalytic activity">
    <reaction evidence="1">
        <text>tRNA(Lys) + L-lysine + ATP = L-lysyl-tRNA(Lys) + AMP + diphosphate</text>
        <dbReference type="Rhea" id="RHEA:20792"/>
        <dbReference type="Rhea" id="RHEA-COMP:9696"/>
        <dbReference type="Rhea" id="RHEA-COMP:9697"/>
        <dbReference type="ChEBI" id="CHEBI:30616"/>
        <dbReference type="ChEBI" id="CHEBI:32551"/>
        <dbReference type="ChEBI" id="CHEBI:33019"/>
        <dbReference type="ChEBI" id="CHEBI:78442"/>
        <dbReference type="ChEBI" id="CHEBI:78529"/>
        <dbReference type="ChEBI" id="CHEBI:456215"/>
        <dbReference type="EC" id="6.1.1.6"/>
    </reaction>
</comment>
<comment type="cofactor">
    <cofactor evidence="1">
        <name>Mg(2+)</name>
        <dbReference type="ChEBI" id="CHEBI:18420"/>
    </cofactor>
    <text evidence="1">Binds 3 Mg(2+) ions per subunit.</text>
</comment>
<comment type="subunit">
    <text evidence="1">Homodimer.</text>
</comment>
<comment type="subcellular location">
    <subcellularLocation>
        <location evidence="1">Cytoplasm</location>
    </subcellularLocation>
</comment>
<comment type="similarity">
    <text evidence="1">Belongs to the class-II aminoacyl-tRNA synthetase family.</text>
</comment>
<sequence>MTEHVQDENKLIAERRAKLEHIRTNCPANAHPNTWQRSHKAAELQAQYGEQTKEALEELAFQTSIAGRVMAKRGPFLVIQDVSGRIQAYAGKPVQGDLKERYQGLDIGDIIGVKGQLHLSGKGDLYVNMEEYQLLTKALRPLPEKFHGLTDQETRYRQRYVDLIVNEDSRNAFIMRSKVVAAIRNFMVKKEFMEVETPMMHVIPGGASARPFVTHHNALDMAMYLRIAPELYLKRLVVGGFERVFEINRNFRNEGLSPRHNPEFTMMEFYMAYADYKDLMDLTEEMLGSIAQELLGSTSMPYGEETVEFGGAYARLSMLEAIQKYNPDNATIQAMTYEQVKDVEFMRDLASSLGIKLEKFWTCGQLLEEIFGETAETKLMQPTFITGYPADISPLARRNDNNDFITDRFEFFIGGREVANGFSELNDAEDQDNRFKAQVDAKDAGDDEAMFYDADYITALEHGLPPTAGQGIGIDRLVMLFTNTHTIRDVILFPAMRPQA</sequence>
<protein>
    <recommendedName>
        <fullName evidence="1">Lysine--tRNA ligase</fullName>
        <ecNumber evidence="1">6.1.1.6</ecNumber>
    </recommendedName>
    <alternativeName>
        <fullName evidence="1">Lysyl-tRNA synthetase</fullName>
        <shortName evidence="1">LysRS</shortName>
    </alternativeName>
</protein>
<dbReference type="EC" id="6.1.1.6" evidence="1"/>
<dbReference type="EMBL" id="CP000447">
    <property type="protein sequence ID" value="ABI70444.1"/>
    <property type="molecule type" value="Genomic_DNA"/>
</dbReference>
<dbReference type="RefSeq" id="WP_011636071.1">
    <property type="nucleotide sequence ID" value="NC_008345.1"/>
</dbReference>
<dbReference type="SMR" id="Q087X1"/>
<dbReference type="STRING" id="318167.Sfri_0583"/>
<dbReference type="KEGG" id="sfr:Sfri_0583"/>
<dbReference type="eggNOG" id="COG1190">
    <property type="taxonomic scope" value="Bacteria"/>
</dbReference>
<dbReference type="HOGENOM" id="CLU_008255_6_0_6"/>
<dbReference type="OrthoDB" id="9802326at2"/>
<dbReference type="Proteomes" id="UP000000684">
    <property type="component" value="Chromosome"/>
</dbReference>
<dbReference type="GO" id="GO:0005829">
    <property type="term" value="C:cytosol"/>
    <property type="evidence" value="ECO:0007669"/>
    <property type="project" value="TreeGrafter"/>
</dbReference>
<dbReference type="GO" id="GO:0005524">
    <property type="term" value="F:ATP binding"/>
    <property type="evidence" value="ECO:0007669"/>
    <property type="project" value="UniProtKB-UniRule"/>
</dbReference>
<dbReference type="GO" id="GO:0004824">
    <property type="term" value="F:lysine-tRNA ligase activity"/>
    <property type="evidence" value="ECO:0007669"/>
    <property type="project" value="UniProtKB-UniRule"/>
</dbReference>
<dbReference type="GO" id="GO:0000287">
    <property type="term" value="F:magnesium ion binding"/>
    <property type="evidence" value="ECO:0007669"/>
    <property type="project" value="UniProtKB-UniRule"/>
</dbReference>
<dbReference type="GO" id="GO:0000049">
    <property type="term" value="F:tRNA binding"/>
    <property type="evidence" value="ECO:0007669"/>
    <property type="project" value="TreeGrafter"/>
</dbReference>
<dbReference type="GO" id="GO:0006430">
    <property type="term" value="P:lysyl-tRNA aminoacylation"/>
    <property type="evidence" value="ECO:0007669"/>
    <property type="project" value="UniProtKB-UniRule"/>
</dbReference>
<dbReference type="CDD" id="cd00775">
    <property type="entry name" value="LysRS_core"/>
    <property type="match status" value="1"/>
</dbReference>
<dbReference type="CDD" id="cd04322">
    <property type="entry name" value="LysRS_N"/>
    <property type="match status" value="1"/>
</dbReference>
<dbReference type="FunFam" id="2.40.50.140:FF:000024">
    <property type="entry name" value="Lysine--tRNA ligase"/>
    <property type="match status" value="1"/>
</dbReference>
<dbReference type="FunFam" id="3.30.930.10:FF:000001">
    <property type="entry name" value="Lysine--tRNA ligase"/>
    <property type="match status" value="1"/>
</dbReference>
<dbReference type="Gene3D" id="3.30.930.10">
    <property type="entry name" value="Bira Bifunctional Protein, Domain 2"/>
    <property type="match status" value="1"/>
</dbReference>
<dbReference type="Gene3D" id="2.40.50.140">
    <property type="entry name" value="Nucleic acid-binding proteins"/>
    <property type="match status" value="1"/>
</dbReference>
<dbReference type="HAMAP" id="MF_00252">
    <property type="entry name" value="Lys_tRNA_synth_class2"/>
    <property type="match status" value="1"/>
</dbReference>
<dbReference type="InterPro" id="IPR004364">
    <property type="entry name" value="Aa-tRNA-synt_II"/>
</dbReference>
<dbReference type="InterPro" id="IPR006195">
    <property type="entry name" value="aa-tRNA-synth_II"/>
</dbReference>
<dbReference type="InterPro" id="IPR045864">
    <property type="entry name" value="aa-tRNA-synth_II/BPL/LPL"/>
</dbReference>
<dbReference type="InterPro" id="IPR002313">
    <property type="entry name" value="Lys-tRNA-ligase_II"/>
</dbReference>
<dbReference type="InterPro" id="IPR044136">
    <property type="entry name" value="Lys-tRNA-ligase_II_N"/>
</dbReference>
<dbReference type="InterPro" id="IPR018149">
    <property type="entry name" value="Lys-tRNA-synth_II_C"/>
</dbReference>
<dbReference type="InterPro" id="IPR012340">
    <property type="entry name" value="NA-bd_OB-fold"/>
</dbReference>
<dbReference type="InterPro" id="IPR004365">
    <property type="entry name" value="NA-bd_OB_tRNA"/>
</dbReference>
<dbReference type="NCBIfam" id="TIGR00499">
    <property type="entry name" value="lysS_bact"/>
    <property type="match status" value="1"/>
</dbReference>
<dbReference type="NCBIfam" id="NF001756">
    <property type="entry name" value="PRK00484.1"/>
    <property type="match status" value="1"/>
</dbReference>
<dbReference type="PANTHER" id="PTHR42918:SF15">
    <property type="entry name" value="LYSINE--TRNA LIGASE, CHLOROPLASTIC_MITOCHONDRIAL"/>
    <property type="match status" value="1"/>
</dbReference>
<dbReference type="PANTHER" id="PTHR42918">
    <property type="entry name" value="LYSYL-TRNA SYNTHETASE"/>
    <property type="match status" value="1"/>
</dbReference>
<dbReference type="Pfam" id="PF00152">
    <property type="entry name" value="tRNA-synt_2"/>
    <property type="match status" value="1"/>
</dbReference>
<dbReference type="Pfam" id="PF01336">
    <property type="entry name" value="tRNA_anti-codon"/>
    <property type="match status" value="1"/>
</dbReference>
<dbReference type="PRINTS" id="PR00982">
    <property type="entry name" value="TRNASYNTHLYS"/>
</dbReference>
<dbReference type="SUPFAM" id="SSF55681">
    <property type="entry name" value="Class II aaRS and biotin synthetases"/>
    <property type="match status" value="1"/>
</dbReference>
<dbReference type="SUPFAM" id="SSF50249">
    <property type="entry name" value="Nucleic acid-binding proteins"/>
    <property type="match status" value="1"/>
</dbReference>
<dbReference type="PROSITE" id="PS50862">
    <property type="entry name" value="AA_TRNA_LIGASE_II"/>
    <property type="match status" value="1"/>
</dbReference>
<proteinExistence type="inferred from homology"/>
<organism>
    <name type="scientific">Shewanella frigidimarina (strain NCIMB 400)</name>
    <dbReference type="NCBI Taxonomy" id="318167"/>
    <lineage>
        <taxon>Bacteria</taxon>
        <taxon>Pseudomonadati</taxon>
        <taxon>Pseudomonadota</taxon>
        <taxon>Gammaproteobacteria</taxon>
        <taxon>Alteromonadales</taxon>
        <taxon>Shewanellaceae</taxon>
        <taxon>Shewanella</taxon>
    </lineage>
</organism>
<evidence type="ECO:0000255" key="1">
    <source>
        <dbReference type="HAMAP-Rule" id="MF_00252"/>
    </source>
</evidence>
<accession>Q087X1</accession>
<name>SYK_SHEFN</name>